<accession>Q8EIV3</accession>
<evidence type="ECO:0000305" key="1"/>
<protein>
    <recommendedName>
        <fullName>UPF0251 protein SO_0727</fullName>
    </recommendedName>
</protein>
<name>Y727_SHEON</name>
<organism>
    <name type="scientific">Shewanella oneidensis (strain ATCC 700550 / JCM 31522 / CIP 106686 / LMG 19005 / NCIMB 14063 / MR-1)</name>
    <dbReference type="NCBI Taxonomy" id="211586"/>
    <lineage>
        <taxon>Bacteria</taxon>
        <taxon>Pseudomonadati</taxon>
        <taxon>Pseudomonadota</taxon>
        <taxon>Gammaproteobacteria</taxon>
        <taxon>Alteromonadales</taxon>
        <taxon>Shewanellaceae</taxon>
        <taxon>Shewanella</taxon>
    </lineage>
</organism>
<sequence>MPRPKKCRQLSSCVPCSLFKPNGIPAANLSQILLAADEFEALELGDVQRLSQLEAAAQMGISRQTFGYLLASARQKVATAITQGLVLKLPTPNDKDPI</sequence>
<proteinExistence type="inferred from homology"/>
<dbReference type="EMBL" id="AE014299">
    <property type="protein sequence ID" value="AAN53805.1"/>
    <property type="molecule type" value="Genomic_DNA"/>
</dbReference>
<dbReference type="RefSeq" id="NP_716360.1">
    <property type="nucleotide sequence ID" value="NC_004347.2"/>
</dbReference>
<dbReference type="RefSeq" id="WP_011071038.1">
    <property type="nucleotide sequence ID" value="NZ_CP053946.1"/>
</dbReference>
<dbReference type="SMR" id="Q8EIV3"/>
<dbReference type="STRING" id="211586.SO_0727"/>
<dbReference type="PaxDb" id="211586-SO_0727"/>
<dbReference type="KEGG" id="son:SO_0727"/>
<dbReference type="PATRIC" id="fig|211586.12.peg.696"/>
<dbReference type="eggNOG" id="COG1342">
    <property type="taxonomic scope" value="Bacteria"/>
</dbReference>
<dbReference type="HOGENOM" id="CLU_094511_2_1_6"/>
<dbReference type="OrthoDB" id="280278at2"/>
<dbReference type="PhylomeDB" id="Q8EIV3"/>
<dbReference type="BioCyc" id="SONE211586:G1GMP-681-MONOMER"/>
<dbReference type="Proteomes" id="UP000008186">
    <property type="component" value="Chromosome"/>
</dbReference>
<dbReference type="Gene3D" id="1.10.10.10">
    <property type="entry name" value="Winged helix-like DNA-binding domain superfamily/Winged helix DNA-binding domain"/>
    <property type="match status" value="1"/>
</dbReference>
<dbReference type="HAMAP" id="MF_00674">
    <property type="entry name" value="UPF0251"/>
    <property type="match status" value="1"/>
</dbReference>
<dbReference type="InterPro" id="IPR002852">
    <property type="entry name" value="UPF0251"/>
</dbReference>
<dbReference type="InterPro" id="IPR036388">
    <property type="entry name" value="WH-like_DNA-bd_sf"/>
</dbReference>
<dbReference type="PANTHER" id="PTHR37478">
    <property type="match status" value="1"/>
</dbReference>
<dbReference type="PANTHER" id="PTHR37478:SF2">
    <property type="entry name" value="UPF0251 PROTEIN TK0562"/>
    <property type="match status" value="1"/>
</dbReference>
<dbReference type="Pfam" id="PF02001">
    <property type="entry name" value="DUF134"/>
    <property type="match status" value="1"/>
</dbReference>
<reference key="1">
    <citation type="journal article" date="2002" name="Nat. Biotechnol.">
        <title>Genome sequence of the dissimilatory metal ion-reducing bacterium Shewanella oneidensis.</title>
        <authorList>
            <person name="Heidelberg J.F."/>
            <person name="Paulsen I.T."/>
            <person name="Nelson K.E."/>
            <person name="Gaidos E.J."/>
            <person name="Nelson W.C."/>
            <person name="Read T.D."/>
            <person name="Eisen J.A."/>
            <person name="Seshadri R."/>
            <person name="Ward N.L."/>
            <person name="Methe B.A."/>
            <person name="Clayton R.A."/>
            <person name="Meyer T."/>
            <person name="Tsapin A."/>
            <person name="Scott J."/>
            <person name="Beanan M.J."/>
            <person name="Brinkac L.M."/>
            <person name="Daugherty S.C."/>
            <person name="DeBoy R.T."/>
            <person name="Dodson R.J."/>
            <person name="Durkin A.S."/>
            <person name="Haft D.H."/>
            <person name="Kolonay J.F."/>
            <person name="Madupu R."/>
            <person name="Peterson J.D."/>
            <person name="Umayam L.A."/>
            <person name="White O."/>
            <person name="Wolf A.M."/>
            <person name="Vamathevan J.J."/>
            <person name="Weidman J.F."/>
            <person name="Impraim M."/>
            <person name="Lee K."/>
            <person name="Berry K.J."/>
            <person name="Lee C."/>
            <person name="Mueller J."/>
            <person name="Khouri H.M."/>
            <person name="Gill J."/>
            <person name="Utterback T.R."/>
            <person name="McDonald L.A."/>
            <person name="Feldblyum T.V."/>
            <person name="Smith H.O."/>
            <person name="Venter J.C."/>
            <person name="Nealson K.H."/>
            <person name="Fraser C.M."/>
        </authorList>
    </citation>
    <scope>NUCLEOTIDE SEQUENCE [LARGE SCALE GENOMIC DNA]</scope>
    <source>
        <strain>ATCC 700550 / JCM 31522 / CIP 106686 / LMG 19005 / NCIMB 14063 / MR-1</strain>
    </source>
</reference>
<comment type="similarity">
    <text evidence="1">Belongs to the UPF0251 family.</text>
</comment>
<gene>
    <name type="ordered locus">SO_0727</name>
</gene>
<feature type="chain" id="PRO_0000147590" description="UPF0251 protein SO_0727">
    <location>
        <begin position="1"/>
        <end position="98"/>
    </location>
</feature>
<keyword id="KW-1185">Reference proteome</keyword>